<proteinExistence type="inferred from homology"/>
<comment type="function">
    <text evidence="1">Involved in the biosynthesis of branched-chain amino acids (BCAA). Catalyzes an alkyl-migration followed by a ketol-acid reduction of (S)-2-acetolactate (S2AL) to yield (R)-2,3-dihydroxy-isovalerate. In the isomerase reaction, S2AL is rearranged via a Mg-dependent methyl migration to produce 3-hydroxy-3-methyl-2-ketobutyrate (HMKB). In the reductase reaction, this 2-ketoacid undergoes a metal-dependent reduction by NADPH to yield (R)-2,3-dihydroxy-isovalerate.</text>
</comment>
<comment type="catalytic activity">
    <reaction evidence="1">
        <text>(2R)-2,3-dihydroxy-3-methylbutanoate + NADP(+) = (2S)-2-acetolactate + NADPH + H(+)</text>
        <dbReference type="Rhea" id="RHEA:22068"/>
        <dbReference type="ChEBI" id="CHEBI:15378"/>
        <dbReference type="ChEBI" id="CHEBI:49072"/>
        <dbReference type="ChEBI" id="CHEBI:57783"/>
        <dbReference type="ChEBI" id="CHEBI:58349"/>
        <dbReference type="ChEBI" id="CHEBI:58476"/>
        <dbReference type="EC" id="1.1.1.86"/>
    </reaction>
</comment>
<comment type="catalytic activity">
    <reaction evidence="1">
        <text>(2R,3R)-2,3-dihydroxy-3-methylpentanoate + NADP(+) = (S)-2-ethyl-2-hydroxy-3-oxobutanoate + NADPH + H(+)</text>
        <dbReference type="Rhea" id="RHEA:13493"/>
        <dbReference type="ChEBI" id="CHEBI:15378"/>
        <dbReference type="ChEBI" id="CHEBI:49256"/>
        <dbReference type="ChEBI" id="CHEBI:49258"/>
        <dbReference type="ChEBI" id="CHEBI:57783"/>
        <dbReference type="ChEBI" id="CHEBI:58349"/>
        <dbReference type="EC" id="1.1.1.86"/>
    </reaction>
</comment>
<comment type="cofactor">
    <cofactor evidence="1">
        <name>Mg(2+)</name>
        <dbReference type="ChEBI" id="CHEBI:18420"/>
    </cofactor>
    <text evidence="1">Binds 2 magnesium ions per subunit.</text>
</comment>
<comment type="pathway">
    <text evidence="1">Amino-acid biosynthesis; L-isoleucine biosynthesis; L-isoleucine from 2-oxobutanoate: step 2/4.</text>
</comment>
<comment type="pathway">
    <text evidence="1">Amino-acid biosynthesis; L-valine biosynthesis; L-valine from pyruvate: step 2/4.</text>
</comment>
<comment type="similarity">
    <text evidence="1">Belongs to the ketol-acid reductoisomerase family.</text>
</comment>
<protein>
    <recommendedName>
        <fullName evidence="1">Ketol-acid reductoisomerase (NADP(+))</fullName>
        <shortName evidence="1">KARI</shortName>
        <ecNumber evidence="1">1.1.1.86</ecNumber>
    </recommendedName>
    <alternativeName>
        <fullName evidence="1">Acetohydroxy-acid isomeroreductase</fullName>
        <shortName evidence="1">AHIR</shortName>
    </alternativeName>
    <alternativeName>
        <fullName evidence="1">Alpha-keto-beta-hydroxylacyl reductoisomerase</fullName>
    </alternativeName>
    <alternativeName>
        <fullName evidence="1">Ketol-acid reductoisomerase type 1</fullName>
    </alternativeName>
    <alternativeName>
        <fullName evidence="1">Ketol-acid reductoisomerase type I</fullName>
    </alternativeName>
</protein>
<reference key="1">
    <citation type="submission" date="2009-01" db="EMBL/GenBank/DDBJ databases">
        <title>Complete sequence of Chloroflexus sp. Y-400-fl.</title>
        <authorList>
            <consortium name="US DOE Joint Genome Institute"/>
            <person name="Lucas S."/>
            <person name="Copeland A."/>
            <person name="Lapidus A."/>
            <person name="Glavina del Rio T."/>
            <person name="Dalin E."/>
            <person name="Tice H."/>
            <person name="Bruce D."/>
            <person name="Goodwin L."/>
            <person name="Pitluck S."/>
            <person name="Sims D."/>
            <person name="Kiss H."/>
            <person name="Brettin T."/>
            <person name="Detter J.C."/>
            <person name="Han C."/>
            <person name="Larimer F."/>
            <person name="Land M."/>
            <person name="Hauser L."/>
            <person name="Kyrpides N."/>
            <person name="Ovchinnikova G."/>
            <person name="Bryant D.A."/>
            <person name="Richardson P."/>
        </authorList>
    </citation>
    <scope>NUCLEOTIDE SEQUENCE [LARGE SCALE GENOMIC DNA]</scope>
    <source>
        <strain>ATCC 29364 / DSM 637 / Y-400-fl</strain>
    </source>
</reference>
<accession>B9LGM7</accession>
<gene>
    <name evidence="1" type="primary">ilvC</name>
    <name type="ordered locus">Chy400_0177</name>
</gene>
<organism>
    <name type="scientific">Chloroflexus aurantiacus (strain ATCC 29364 / DSM 637 / Y-400-fl)</name>
    <dbReference type="NCBI Taxonomy" id="480224"/>
    <lineage>
        <taxon>Bacteria</taxon>
        <taxon>Bacillati</taxon>
        <taxon>Chloroflexota</taxon>
        <taxon>Chloroflexia</taxon>
        <taxon>Chloroflexales</taxon>
        <taxon>Chloroflexineae</taxon>
        <taxon>Chloroflexaceae</taxon>
        <taxon>Chloroflexus</taxon>
    </lineage>
</organism>
<sequence>MAELYYDNQADLNRLKNKPIAIIGFGSQGHAHARNLADSGLDVRVGLYPGSKSWAKVEAAGLKVMTVAEAAREAQIVMILTPDIGQADLYREHIAPAMEPGKTLMFAHGFNIRFGQIIPPQGIDVSMVAPKAPGHRVREVFVQGGGVPALIAVEQDATGGAFEDALAYAKGLGCTRAGVLRTTFAEETETDLFGEQVVLCGGVSALVKAAFETLVEAGYQPEVAYFECMHELKLIVDLFYQGGLNYMRYSVSDTAEWGDYTAGPKIITDQTRAAMRQILADIQSGAFAEDWIDENHNGRPRFNAYRQADINHPIEQIGRELRRMMPFVNPREVKPGEGGA</sequence>
<keyword id="KW-0028">Amino-acid biosynthesis</keyword>
<keyword id="KW-0100">Branched-chain amino acid biosynthesis</keyword>
<keyword id="KW-0460">Magnesium</keyword>
<keyword id="KW-0479">Metal-binding</keyword>
<keyword id="KW-0521">NADP</keyword>
<keyword id="KW-0560">Oxidoreductase</keyword>
<evidence type="ECO:0000255" key="1">
    <source>
        <dbReference type="HAMAP-Rule" id="MF_00435"/>
    </source>
</evidence>
<evidence type="ECO:0000255" key="2">
    <source>
        <dbReference type="PROSITE-ProRule" id="PRU01197"/>
    </source>
</evidence>
<evidence type="ECO:0000255" key="3">
    <source>
        <dbReference type="PROSITE-ProRule" id="PRU01198"/>
    </source>
</evidence>
<dbReference type="EC" id="1.1.1.86" evidence="1"/>
<dbReference type="EMBL" id="CP001364">
    <property type="protein sequence ID" value="ACM51616.1"/>
    <property type="molecule type" value="Genomic_DNA"/>
</dbReference>
<dbReference type="SMR" id="B9LGM7"/>
<dbReference type="KEGG" id="chl:Chy400_0177"/>
<dbReference type="HOGENOM" id="CLU_033821_0_1_0"/>
<dbReference type="OrthoDB" id="9804088at2"/>
<dbReference type="UniPathway" id="UPA00047">
    <property type="reaction ID" value="UER00056"/>
</dbReference>
<dbReference type="UniPathway" id="UPA00049">
    <property type="reaction ID" value="UER00060"/>
</dbReference>
<dbReference type="GO" id="GO:0005829">
    <property type="term" value="C:cytosol"/>
    <property type="evidence" value="ECO:0007669"/>
    <property type="project" value="TreeGrafter"/>
</dbReference>
<dbReference type="GO" id="GO:0004455">
    <property type="term" value="F:ketol-acid reductoisomerase activity"/>
    <property type="evidence" value="ECO:0007669"/>
    <property type="project" value="UniProtKB-UniRule"/>
</dbReference>
<dbReference type="GO" id="GO:0000287">
    <property type="term" value="F:magnesium ion binding"/>
    <property type="evidence" value="ECO:0007669"/>
    <property type="project" value="UniProtKB-UniRule"/>
</dbReference>
<dbReference type="GO" id="GO:0050661">
    <property type="term" value="F:NADP binding"/>
    <property type="evidence" value="ECO:0007669"/>
    <property type="project" value="InterPro"/>
</dbReference>
<dbReference type="GO" id="GO:0009097">
    <property type="term" value="P:isoleucine biosynthetic process"/>
    <property type="evidence" value="ECO:0007669"/>
    <property type="project" value="UniProtKB-UniRule"/>
</dbReference>
<dbReference type="GO" id="GO:0009099">
    <property type="term" value="P:L-valine biosynthetic process"/>
    <property type="evidence" value="ECO:0007669"/>
    <property type="project" value="UniProtKB-UniRule"/>
</dbReference>
<dbReference type="FunFam" id="3.40.50.720:FF:000023">
    <property type="entry name" value="Ketol-acid reductoisomerase (NADP(+))"/>
    <property type="match status" value="1"/>
</dbReference>
<dbReference type="Gene3D" id="6.10.240.10">
    <property type="match status" value="1"/>
</dbReference>
<dbReference type="Gene3D" id="3.40.50.720">
    <property type="entry name" value="NAD(P)-binding Rossmann-like Domain"/>
    <property type="match status" value="1"/>
</dbReference>
<dbReference type="HAMAP" id="MF_00435">
    <property type="entry name" value="IlvC"/>
    <property type="match status" value="1"/>
</dbReference>
<dbReference type="InterPro" id="IPR008927">
    <property type="entry name" value="6-PGluconate_DH-like_C_sf"/>
</dbReference>
<dbReference type="InterPro" id="IPR013023">
    <property type="entry name" value="KARI"/>
</dbReference>
<dbReference type="InterPro" id="IPR000506">
    <property type="entry name" value="KARI_C"/>
</dbReference>
<dbReference type="InterPro" id="IPR013116">
    <property type="entry name" value="KARI_N"/>
</dbReference>
<dbReference type="InterPro" id="IPR014359">
    <property type="entry name" value="KARI_prok"/>
</dbReference>
<dbReference type="InterPro" id="IPR036291">
    <property type="entry name" value="NAD(P)-bd_dom_sf"/>
</dbReference>
<dbReference type="NCBIfam" id="TIGR00465">
    <property type="entry name" value="ilvC"/>
    <property type="match status" value="1"/>
</dbReference>
<dbReference type="NCBIfam" id="NF004017">
    <property type="entry name" value="PRK05479.1"/>
    <property type="match status" value="1"/>
</dbReference>
<dbReference type="NCBIfam" id="NF009940">
    <property type="entry name" value="PRK13403.1"/>
    <property type="match status" value="1"/>
</dbReference>
<dbReference type="PANTHER" id="PTHR21371">
    <property type="entry name" value="KETOL-ACID REDUCTOISOMERASE, MITOCHONDRIAL"/>
    <property type="match status" value="1"/>
</dbReference>
<dbReference type="PANTHER" id="PTHR21371:SF1">
    <property type="entry name" value="KETOL-ACID REDUCTOISOMERASE, MITOCHONDRIAL"/>
    <property type="match status" value="1"/>
</dbReference>
<dbReference type="Pfam" id="PF01450">
    <property type="entry name" value="KARI_C"/>
    <property type="match status" value="1"/>
</dbReference>
<dbReference type="Pfam" id="PF07991">
    <property type="entry name" value="KARI_N"/>
    <property type="match status" value="1"/>
</dbReference>
<dbReference type="PIRSF" id="PIRSF000116">
    <property type="entry name" value="IlvC_gammaproteo"/>
    <property type="match status" value="1"/>
</dbReference>
<dbReference type="SUPFAM" id="SSF48179">
    <property type="entry name" value="6-phosphogluconate dehydrogenase C-terminal domain-like"/>
    <property type="match status" value="1"/>
</dbReference>
<dbReference type="SUPFAM" id="SSF51735">
    <property type="entry name" value="NAD(P)-binding Rossmann-fold domains"/>
    <property type="match status" value="1"/>
</dbReference>
<dbReference type="PROSITE" id="PS51851">
    <property type="entry name" value="KARI_C"/>
    <property type="match status" value="1"/>
</dbReference>
<dbReference type="PROSITE" id="PS51850">
    <property type="entry name" value="KARI_N"/>
    <property type="match status" value="1"/>
</dbReference>
<feature type="chain" id="PRO_1000190931" description="Ketol-acid reductoisomerase (NADP(+))">
    <location>
        <begin position="1"/>
        <end position="340"/>
    </location>
</feature>
<feature type="domain" description="KARI N-terminal Rossmann" evidence="2">
    <location>
        <begin position="2"/>
        <end position="182"/>
    </location>
</feature>
<feature type="domain" description="KARI C-terminal knotted" evidence="3">
    <location>
        <begin position="183"/>
        <end position="328"/>
    </location>
</feature>
<feature type="active site" evidence="1">
    <location>
        <position position="108"/>
    </location>
</feature>
<feature type="binding site" evidence="1">
    <location>
        <begin position="25"/>
        <end position="28"/>
    </location>
    <ligand>
        <name>NADP(+)</name>
        <dbReference type="ChEBI" id="CHEBI:58349"/>
    </ligand>
</feature>
<feature type="binding site" evidence="1">
    <location>
        <position position="51"/>
    </location>
    <ligand>
        <name>NADP(+)</name>
        <dbReference type="ChEBI" id="CHEBI:58349"/>
    </ligand>
</feature>
<feature type="binding site" evidence="1">
    <location>
        <position position="53"/>
    </location>
    <ligand>
        <name>NADP(+)</name>
        <dbReference type="ChEBI" id="CHEBI:58349"/>
    </ligand>
</feature>
<feature type="binding site" evidence="1">
    <location>
        <begin position="83"/>
        <end position="86"/>
    </location>
    <ligand>
        <name>NADP(+)</name>
        <dbReference type="ChEBI" id="CHEBI:58349"/>
    </ligand>
</feature>
<feature type="binding site" evidence="1">
    <location>
        <position position="134"/>
    </location>
    <ligand>
        <name>NADP(+)</name>
        <dbReference type="ChEBI" id="CHEBI:58349"/>
    </ligand>
</feature>
<feature type="binding site" evidence="1">
    <location>
        <position position="191"/>
    </location>
    <ligand>
        <name>Mg(2+)</name>
        <dbReference type="ChEBI" id="CHEBI:18420"/>
        <label>1</label>
    </ligand>
</feature>
<feature type="binding site" evidence="1">
    <location>
        <position position="191"/>
    </location>
    <ligand>
        <name>Mg(2+)</name>
        <dbReference type="ChEBI" id="CHEBI:18420"/>
        <label>2</label>
    </ligand>
</feature>
<feature type="binding site" evidence="1">
    <location>
        <position position="195"/>
    </location>
    <ligand>
        <name>Mg(2+)</name>
        <dbReference type="ChEBI" id="CHEBI:18420"/>
        <label>1</label>
    </ligand>
</feature>
<feature type="binding site" evidence="1">
    <location>
        <position position="227"/>
    </location>
    <ligand>
        <name>Mg(2+)</name>
        <dbReference type="ChEBI" id="CHEBI:18420"/>
        <label>2</label>
    </ligand>
</feature>
<feature type="binding site" evidence="1">
    <location>
        <position position="231"/>
    </location>
    <ligand>
        <name>Mg(2+)</name>
        <dbReference type="ChEBI" id="CHEBI:18420"/>
        <label>2</label>
    </ligand>
</feature>
<feature type="binding site" evidence="1">
    <location>
        <position position="252"/>
    </location>
    <ligand>
        <name>substrate</name>
    </ligand>
</feature>
<name>ILVC_CHLSY</name>